<sequence>MKNFLLLAIMLFPHLTWANVISETGERQPVNIQAIIMFVLFVGFTLYITYWASKKTRSRTDYYTAGGRITGFQNGMAIAGDFMSAASFLGISALVYTSGYDGLIYSIGFLIGWPIILFLIAERLRNLGRYTFADVASYRLQQRPIRILSAIGSLFVVALYLIAQMVGAGKLIELLFGLNYHVAVVLVGILMVLYVLFGGMLATTWVQIIKAILLLAGATFMALMVMKIVNFNFNTLFKEAIAVHSRGEAIMSPGGLVSDPISALSLGLALMFGTAGLPHIIMRFFTVSDAKEARKSVFYATGFIGYFYILTFIIGFGAILLVSPNPSFKDTTGALIGGTNMAAVHLASAVGGNLFLGFISAVAFATILAVVAGLTLAGASAVSHDLYANAIKSGKANERDELRVSKITVVILGFIAIGLGILFENQNIAFMVGLAFSIAASCNFPIILLSMYWHKLTTRGALVGGWLGLITAVVLMILGPTIWVSILGHEKPIYPYEYPALFSMIIAFIGSWLFSITDNSQQGMQEREQFRIQFIRSQTGLGIAQGKTH</sequence>
<accession>Q7NA72</accession>
<evidence type="ECO:0000255" key="1">
    <source>
        <dbReference type="HAMAP-Rule" id="MF_01426"/>
    </source>
</evidence>
<proteinExistence type="inferred from homology"/>
<comment type="function">
    <text evidence="1">Transports acetate.</text>
</comment>
<comment type="subcellular location">
    <subcellularLocation>
        <location evidence="1">Cell inner membrane</location>
        <topology evidence="1">Multi-pass membrane protein</topology>
    </subcellularLocation>
</comment>
<comment type="similarity">
    <text evidence="1">Belongs to the sodium:solute symporter (SSF) (TC 2.A.21) family.</text>
</comment>
<name>ACTP_PHOLL</name>
<organism>
    <name type="scientific">Photorhabdus laumondii subsp. laumondii (strain DSM 15139 / CIP 105565 / TT01)</name>
    <name type="common">Photorhabdus luminescens subsp. laumondii</name>
    <dbReference type="NCBI Taxonomy" id="243265"/>
    <lineage>
        <taxon>Bacteria</taxon>
        <taxon>Pseudomonadati</taxon>
        <taxon>Pseudomonadota</taxon>
        <taxon>Gammaproteobacteria</taxon>
        <taxon>Enterobacterales</taxon>
        <taxon>Morganellaceae</taxon>
        <taxon>Photorhabdus</taxon>
    </lineage>
</organism>
<reference key="1">
    <citation type="journal article" date="2003" name="Nat. Biotechnol.">
        <title>The genome sequence of the entomopathogenic bacterium Photorhabdus luminescens.</title>
        <authorList>
            <person name="Duchaud E."/>
            <person name="Rusniok C."/>
            <person name="Frangeul L."/>
            <person name="Buchrieser C."/>
            <person name="Givaudan A."/>
            <person name="Taourit S."/>
            <person name="Bocs S."/>
            <person name="Boursaux-Eude C."/>
            <person name="Chandler M."/>
            <person name="Charles J.-F."/>
            <person name="Dassa E."/>
            <person name="Derose R."/>
            <person name="Derzelle S."/>
            <person name="Freyssinet G."/>
            <person name="Gaudriault S."/>
            <person name="Medigue C."/>
            <person name="Lanois A."/>
            <person name="Powell K."/>
            <person name="Siguier P."/>
            <person name="Vincent R."/>
            <person name="Wingate V."/>
            <person name="Zouine M."/>
            <person name="Glaser P."/>
            <person name="Boemare N."/>
            <person name="Danchin A."/>
            <person name="Kunst F."/>
        </authorList>
    </citation>
    <scope>NUCLEOTIDE SEQUENCE [LARGE SCALE GENOMIC DNA]</scope>
    <source>
        <strain>DSM 15139 / CIP 105565 / TT01</strain>
    </source>
</reference>
<protein>
    <recommendedName>
        <fullName evidence="1">Cation/acetate symporter ActP</fullName>
    </recommendedName>
    <alternativeName>
        <fullName evidence="1">Acetate permease</fullName>
    </alternativeName>
    <alternativeName>
        <fullName evidence="1">Acetate transporter ActP</fullName>
    </alternativeName>
</protein>
<feature type="chain" id="PRO_0000105411" description="Cation/acetate symporter ActP">
    <location>
        <begin position="1"/>
        <end position="549"/>
    </location>
</feature>
<feature type="transmembrane region" description="Helical" evidence="1">
    <location>
        <begin position="32"/>
        <end position="54"/>
    </location>
</feature>
<feature type="transmembrane region" description="Helical" evidence="1">
    <location>
        <begin position="75"/>
        <end position="97"/>
    </location>
</feature>
<feature type="transmembrane region" description="Helical" evidence="1">
    <location>
        <begin position="102"/>
        <end position="124"/>
    </location>
</feature>
<feature type="transmembrane region" description="Helical" evidence="1">
    <location>
        <begin position="145"/>
        <end position="167"/>
    </location>
</feature>
<feature type="transmembrane region" description="Helical" evidence="1">
    <location>
        <begin position="182"/>
        <end position="204"/>
    </location>
</feature>
<feature type="transmembrane region" description="Helical" evidence="1">
    <location>
        <begin position="211"/>
        <end position="233"/>
    </location>
</feature>
<feature type="transmembrane region" description="Helical" evidence="1">
    <location>
        <begin position="263"/>
        <end position="285"/>
    </location>
</feature>
<feature type="transmembrane region" description="Helical" evidence="1">
    <location>
        <begin position="298"/>
        <end position="320"/>
    </location>
</feature>
<feature type="transmembrane region" description="Helical" evidence="1">
    <location>
        <begin position="361"/>
        <end position="383"/>
    </location>
</feature>
<feature type="transmembrane region" description="Helical" evidence="1">
    <location>
        <begin position="404"/>
        <end position="423"/>
    </location>
</feature>
<feature type="transmembrane region" description="Helical" evidence="1">
    <location>
        <begin position="428"/>
        <end position="450"/>
    </location>
</feature>
<feature type="transmembrane region" description="Helical" evidence="1">
    <location>
        <begin position="462"/>
        <end position="484"/>
    </location>
</feature>
<feature type="transmembrane region" description="Helical" evidence="1">
    <location>
        <begin position="494"/>
        <end position="516"/>
    </location>
</feature>
<dbReference type="EMBL" id="BX571859">
    <property type="protein sequence ID" value="CAE12367.1"/>
    <property type="molecule type" value="Genomic_DNA"/>
</dbReference>
<dbReference type="RefSeq" id="WP_011144478.1">
    <property type="nucleotide sequence ID" value="NC_005126.1"/>
</dbReference>
<dbReference type="SMR" id="Q7NA72"/>
<dbReference type="STRING" id="243265.plu0072"/>
<dbReference type="GeneID" id="48846373"/>
<dbReference type="KEGG" id="plu:plu0072"/>
<dbReference type="eggNOG" id="COG4147">
    <property type="taxonomic scope" value="Bacteria"/>
</dbReference>
<dbReference type="HOGENOM" id="CLU_018808_8_3_6"/>
<dbReference type="OrthoDB" id="9764416at2"/>
<dbReference type="Proteomes" id="UP000002514">
    <property type="component" value="Chromosome"/>
</dbReference>
<dbReference type="GO" id="GO:0005886">
    <property type="term" value="C:plasma membrane"/>
    <property type="evidence" value="ECO:0007669"/>
    <property type="project" value="UniProtKB-SubCell"/>
</dbReference>
<dbReference type="GO" id="GO:0015123">
    <property type="term" value="F:acetate transmembrane transporter activity"/>
    <property type="evidence" value="ECO:0007669"/>
    <property type="project" value="UniProtKB-UniRule"/>
</dbReference>
<dbReference type="GO" id="GO:0043879">
    <property type="term" value="F:glycolate transmembrane transporter activity"/>
    <property type="evidence" value="ECO:0007669"/>
    <property type="project" value="InterPro"/>
</dbReference>
<dbReference type="GO" id="GO:0015293">
    <property type="term" value="F:symporter activity"/>
    <property type="evidence" value="ECO:0007669"/>
    <property type="project" value="UniProtKB-KW"/>
</dbReference>
<dbReference type="GO" id="GO:0006847">
    <property type="term" value="P:plasma membrane acetate transport"/>
    <property type="evidence" value="ECO:0007669"/>
    <property type="project" value="TreeGrafter"/>
</dbReference>
<dbReference type="GO" id="GO:0006814">
    <property type="term" value="P:sodium ion transport"/>
    <property type="evidence" value="ECO:0007669"/>
    <property type="project" value="UniProtKB-KW"/>
</dbReference>
<dbReference type="CDD" id="cd11480">
    <property type="entry name" value="SLC5sbd_u4"/>
    <property type="match status" value="1"/>
</dbReference>
<dbReference type="FunFam" id="1.20.1730.10:FF:000001">
    <property type="entry name" value="Cation/acetate symporter ActP"/>
    <property type="match status" value="1"/>
</dbReference>
<dbReference type="Gene3D" id="1.20.1730.10">
    <property type="entry name" value="Sodium/glucose cotransporter"/>
    <property type="match status" value="1"/>
</dbReference>
<dbReference type="HAMAP" id="MF_01426">
    <property type="entry name" value="Acet_symport_ActP"/>
    <property type="match status" value="1"/>
</dbReference>
<dbReference type="InterPro" id="IPR014083">
    <property type="entry name" value="Cation/Ac_symporter_ActP"/>
</dbReference>
<dbReference type="InterPro" id="IPR038377">
    <property type="entry name" value="Na/Glc_symporter_sf"/>
</dbReference>
<dbReference type="InterPro" id="IPR001734">
    <property type="entry name" value="Na/solute_symporter"/>
</dbReference>
<dbReference type="InterPro" id="IPR018212">
    <property type="entry name" value="Na/solute_symporter_CS"/>
</dbReference>
<dbReference type="InterPro" id="IPR050277">
    <property type="entry name" value="Sodium:Solute_Symporter"/>
</dbReference>
<dbReference type="NCBIfam" id="NF006903">
    <property type="entry name" value="PRK09395.1"/>
    <property type="match status" value="1"/>
</dbReference>
<dbReference type="NCBIfam" id="NF009135">
    <property type="entry name" value="PRK12488.1"/>
    <property type="match status" value="1"/>
</dbReference>
<dbReference type="NCBIfam" id="TIGR00813">
    <property type="entry name" value="sss"/>
    <property type="match status" value="1"/>
</dbReference>
<dbReference type="NCBIfam" id="TIGR02711">
    <property type="entry name" value="symport_actP"/>
    <property type="match status" value="1"/>
</dbReference>
<dbReference type="PANTHER" id="PTHR48086:SF6">
    <property type="entry name" value="CATION_ACETATE SYMPORTER ACTP"/>
    <property type="match status" value="1"/>
</dbReference>
<dbReference type="PANTHER" id="PTHR48086">
    <property type="entry name" value="SODIUM/PROLINE SYMPORTER-RELATED"/>
    <property type="match status" value="1"/>
</dbReference>
<dbReference type="Pfam" id="PF00474">
    <property type="entry name" value="SSF"/>
    <property type="match status" value="1"/>
</dbReference>
<dbReference type="PROSITE" id="PS00456">
    <property type="entry name" value="NA_SOLUT_SYMP_1"/>
    <property type="match status" value="1"/>
</dbReference>
<dbReference type="PROSITE" id="PS00457">
    <property type="entry name" value="NA_SOLUT_SYMP_2"/>
    <property type="match status" value="1"/>
</dbReference>
<dbReference type="PROSITE" id="PS50283">
    <property type="entry name" value="NA_SOLUT_SYMP_3"/>
    <property type="match status" value="1"/>
</dbReference>
<gene>
    <name evidence="1" type="primary">actP</name>
    <name type="ordered locus">plu0072</name>
</gene>
<keyword id="KW-0997">Cell inner membrane</keyword>
<keyword id="KW-1003">Cell membrane</keyword>
<keyword id="KW-0406">Ion transport</keyword>
<keyword id="KW-0472">Membrane</keyword>
<keyword id="KW-1185">Reference proteome</keyword>
<keyword id="KW-0915">Sodium</keyword>
<keyword id="KW-0739">Sodium transport</keyword>
<keyword id="KW-0769">Symport</keyword>
<keyword id="KW-0812">Transmembrane</keyword>
<keyword id="KW-1133">Transmembrane helix</keyword>
<keyword id="KW-0813">Transport</keyword>